<keyword id="KW-0150">Chloroplast</keyword>
<keyword id="KW-0201">Cytochrome c-type biogenesis</keyword>
<keyword id="KW-0472">Membrane</keyword>
<keyword id="KW-0934">Plastid</keyword>
<keyword id="KW-0793">Thylakoid</keyword>
<keyword id="KW-0812">Transmembrane</keyword>
<keyword id="KW-1133">Transmembrane helix</keyword>
<organism>
    <name type="scientific">Trieres chinensis</name>
    <name type="common">Marine centric diatom</name>
    <name type="synonym">Odontella sinensis</name>
    <dbReference type="NCBI Taxonomy" id="1514140"/>
    <lineage>
        <taxon>Eukaryota</taxon>
        <taxon>Sar</taxon>
        <taxon>Stramenopiles</taxon>
        <taxon>Ochrophyta</taxon>
        <taxon>Bacillariophyta</taxon>
        <taxon>Mediophyceae</taxon>
        <taxon>Biddulphiophycidae</taxon>
        <taxon>Eupodiscales</taxon>
        <taxon>Parodontellaceae</taxon>
        <taxon>Trieres</taxon>
    </lineage>
</organism>
<sequence length="421" mass="48242">MKQSVLRFLADLRFAISILLIIASCSVIGTVIEQDQSIEIYKLNYPLTNRIFGFLSWDIILKFGLDHVYKTWWFLGFIALFGLSLFTCTILQQFPSLKIARRCQFFRTTQQFGLLKLSRNLGNLSLSQLLFRIKKNQYSIFQQKNIVYCYKGLIGRIAPIIVHFSMILILIGAIFGALNGFKAQELIPKTEAFHVQNILSNGQLTRIPKVVSRVNDFWITYTKQATVAQFYSDVSILNTEGNEIVRKTIFVNSPIKYNNIDFYQTDWNVIGLRVQNDTSSILQYPLINLTNAGNKVWVTWIPSDSEFKKGLTILVDNLQGYCSIYDESGIFVGNLELNETFNLNMPITLVDILSSTGLQIKTDPGILLIYTGFLFLMLSTLISYITYSQIWIIQTNRQIFVGGNTTRATFDFEIEFLKLIK</sequence>
<protein>
    <recommendedName>
        <fullName evidence="1">Cytochrome c biogenesis protein Ccs1</fullName>
    </recommendedName>
    <alternativeName>
        <fullName>ORF382</fullName>
    </alternativeName>
</protein>
<comment type="function">
    <text evidence="1">Required during biogenesis of c-type cytochromes (cytochrome c6 and cytochrome f) at the step of heme attachment.</text>
</comment>
<comment type="subunit">
    <text evidence="1">May interact with CcsA.</text>
</comment>
<comment type="subcellular location">
    <subcellularLocation>
        <location evidence="1">Plastid</location>
        <location evidence="1">Chloroplast thylakoid membrane</location>
        <topology evidence="1">Multi-pass membrane protein</topology>
    </subcellularLocation>
</comment>
<comment type="similarity">
    <text evidence="1">Belongs to the Ccs1/CcsB family.</text>
</comment>
<comment type="sequence caution" evidence="2">
    <conflict type="frameshift">
        <sequence resource="EMBL-CDS" id="CAA91658"/>
    </conflict>
</comment>
<geneLocation type="chloroplast"/>
<evidence type="ECO:0000255" key="1">
    <source>
        <dbReference type="HAMAP-Rule" id="MF_01392"/>
    </source>
</evidence>
<evidence type="ECO:0000305" key="2"/>
<gene>
    <name evidence="1" type="primary">ccs1</name>
    <name type="synonym">ycf44</name>
</gene>
<name>CCS1_TRICV</name>
<reference key="1">
    <citation type="journal article" date="1995" name="Plant Mol. Biol. Rep.">
        <title>The chloroplast genome of a chlorophyll a+c-containing alga, Odontella sinensis.</title>
        <authorList>
            <person name="Kowallik K.V."/>
            <person name="Stoebe B."/>
            <person name="Schaffran I."/>
            <person name="Kroth-Pancic P."/>
            <person name="Freier U."/>
        </authorList>
    </citation>
    <scope>NUCLEOTIDE SEQUENCE [LARGE SCALE GENOMIC DNA]</scope>
</reference>
<dbReference type="EMBL" id="Z67753">
    <property type="protein sequence ID" value="CAA91658.1"/>
    <property type="status" value="ALT_FRAME"/>
    <property type="molecule type" value="Genomic_DNA"/>
</dbReference>
<dbReference type="PIR" id="S78285">
    <property type="entry name" value="S78285"/>
</dbReference>
<dbReference type="GO" id="GO:0009535">
    <property type="term" value="C:chloroplast thylakoid membrane"/>
    <property type="evidence" value="ECO:0007669"/>
    <property type="project" value="UniProtKB-SubCell"/>
</dbReference>
<dbReference type="GO" id="GO:0017004">
    <property type="term" value="P:cytochrome complex assembly"/>
    <property type="evidence" value="ECO:0007669"/>
    <property type="project" value="UniProtKB-UniRule"/>
</dbReference>
<dbReference type="HAMAP" id="MF_01392">
    <property type="entry name" value="CytC_Ccs1"/>
    <property type="match status" value="1"/>
</dbReference>
<dbReference type="InterPro" id="IPR023494">
    <property type="entry name" value="Cyt_c_bgen_Ccs1/CcsB/ResB"/>
</dbReference>
<dbReference type="InterPro" id="IPR007816">
    <property type="entry name" value="ResB-like_domain"/>
</dbReference>
<dbReference type="PANTHER" id="PTHR31566">
    <property type="entry name" value="CYTOCHROME C BIOGENESIS PROTEIN CCS1, CHLOROPLASTIC"/>
    <property type="match status" value="1"/>
</dbReference>
<dbReference type="PANTHER" id="PTHR31566:SF0">
    <property type="entry name" value="CYTOCHROME C BIOGENESIS PROTEIN CCS1, CHLOROPLASTIC"/>
    <property type="match status" value="1"/>
</dbReference>
<dbReference type="Pfam" id="PF05140">
    <property type="entry name" value="ResB"/>
    <property type="match status" value="2"/>
</dbReference>
<feature type="chain" id="PRO_0000217363" description="Cytochrome c biogenesis protein Ccs1">
    <location>
        <begin position="1"/>
        <end position="421"/>
    </location>
</feature>
<feature type="transmembrane region" description="Helical" evidence="1">
    <location>
        <begin position="12"/>
        <end position="32"/>
    </location>
</feature>
<feature type="transmembrane region" description="Helical" evidence="1">
    <location>
        <begin position="71"/>
        <end position="91"/>
    </location>
</feature>
<feature type="transmembrane region" description="Helical" evidence="1">
    <location>
        <begin position="157"/>
        <end position="177"/>
    </location>
</feature>
<accession>P49539</accession>
<proteinExistence type="inferred from homology"/>